<proteinExistence type="evidence at protein level"/>
<dbReference type="EC" id="1.14.14.1"/>
<dbReference type="EMBL" id="M63788">
    <property type="protein sequence ID" value="AAA37068.1"/>
    <property type="molecule type" value="mRNA"/>
</dbReference>
<dbReference type="EMBL" id="M27906">
    <property type="protein sequence ID" value="AAA37084.1"/>
    <property type="molecule type" value="mRNA"/>
</dbReference>
<dbReference type="PIR" id="A33293">
    <property type="entry name" value="A33293"/>
</dbReference>
<dbReference type="RefSeq" id="NP_001268512.1">
    <property type="nucleotide sequence ID" value="NM_001281583.1"/>
</dbReference>
<dbReference type="SMR" id="P24454"/>
<dbReference type="STRING" id="10036.ENSMAUP00000001731"/>
<dbReference type="GeneID" id="101825889"/>
<dbReference type="KEGG" id="ag:AAA37068"/>
<dbReference type="KEGG" id="maua:101825889"/>
<dbReference type="eggNOG" id="KOG0156">
    <property type="taxonomic scope" value="Eukaryota"/>
</dbReference>
<dbReference type="OrthoDB" id="2789670at2759"/>
<dbReference type="Proteomes" id="UP000189706">
    <property type="component" value="Unplaced"/>
</dbReference>
<dbReference type="GO" id="GO:0005789">
    <property type="term" value="C:endoplasmic reticulum membrane"/>
    <property type="evidence" value="ECO:0007669"/>
    <property type="project" value="UniProtKB-SubCell"/>
</dbReference>
<dbReference type="GO" id="GO:0008392">
    <property type="term" value="F:arachidonate epoxygenase activity"/>
    <property type="evidence" value="ECO:0007669"/>
    <property type="project" value="TreeGrafter"/>
</dbReference>
<dbReference type="GO" id="GO:0020037">
    <property type="term" value="F:heme binding"/>
    <property type="evidence" value="ECO:0007669"/>
    <property type="project" value="InterPro"/>
</dbReference>
<dbReference type="GO" id="GO:0005506">
    <property type="term" value="F:iron ion binding"/>
    <property type="evidence" value="ECO:0007669"/>
    <property type="project" value="InterPro"/>
</dbReference>
<dbReference type="GO" id="GO:0016712">
    <property type="term" value="F:oxidoreductase activity, acting on paired donors, with incorporation or reduction of molecular oxygen, reduced flavin or flavoprotein as one donor, and incorporation of one atom of oxygen"/>
    <property type="evidence" value="ECO:0007669"/>
    <property type="project" value="UniProtKB-EC"/>
</dbReference>
<dbReference type="GO" id="GO:0009804">
    <property type="term" value="P:coumarin metabolic process"/>
    <property type="evidence" value="ECO:0007669"/>
    <property type="project" value="TreeGrafter"/>
</dbReference>
<dbReference type="GO" id="GO:0019373">
    <property type="term" value="P:epoxygenase P450 pathway"/>
    <property type="evidence" value="ECO:0007669"/>
    <property type="project" value="TreeGrafter"/>
</dbReference>
<dbReference type="GO" id="GO:0006805">
    <property type="term" value="P:xenobiotic metabolic process"/>
    <property type="evidence" value="ECO:0007669"/>
    <property type="project" value="TreeGrafter"/>
</dbReference>
<dbReference type="CDD" id="cd20668">
    <property type="entry name" value="CYP2A"/>
    <property type="match status" value="1"/>
</dbReference>
<dbReference type="FunFam" id="1.10.630.10:FF:000238">
    <property type="entry name" value="Cytochrome P450 2A6"/>
    <property type="match status" value="1"/>
</dbReference>
<dbReference type="Gene3D" id="1.10.630.10">
    <property type="entry name" value="Cytochrome P450"/>
    <property type="match status" value="1"/>
</dbReference>
<dbReference type="InterPro" id="IPR001128">
    <property type="entry name" value="Cyt_P450"/>
</dbReference>
<dbReference type="InterPro" id="IPR017972">
    <property type="entry name" value="Cyt_P450_CS"/>
</dbReference>
<dbReference type="InterPro" id="IPR002401">
    <property type="entry name" value="Cyt_P450_E_grp-I"/>
</dbReference>
<dbReference type="InterPro" id="IPR008067">
    <property type="entry name" value="Cyt_P450_E_grp-I_CYP2A-like"/>
</dbReference>
<dbReference type="InterPro" id="IPR036396">
    <property type="entry name" value="Cyt_P450_sf"/>
</dbReference>
<dbReference type="InterPro" id="IPR050182">
    <property type="entry name" value="Cytochrome_P450_fam2"/>
</dbReference>
<dbReference type="PANTHER" id="PTHR24300:SF180">
    <property type="entry name" value="CYTOCHROME P450 2A6"/>
    <property type="match status" value="1"/>
</dbReference>
<dbReference type="PANTHER" id="PTHR24300">
    <property type="entry name" value="CYTOCHROME P450 508A4-RELATED"/>
    <property type="match status" value="1"/>
</dbReference>
<dbReference type="Pfam" id="PF00067">
    <property type="entry name" value="p450"/>
    <property type="match status" value="1"/>
</dbReference>
<dbReference type="PRINTS" id="PR00463">
    <property type="entry name" value="EP450I"/>
</dbReference>
<dbReference type="PRINTS" id="PR01684">
    <property type="entry name" value="EP450ICYP2A"/>
</dbReference>
<dbReference type="PRINTS" id="PR00385">
    <property type="entry name" value="P450"/>
</dbReference>
<dbReference type="SUPFAM" id="SSF48264">
    <property type="entry name" value="Cytochrome P450"/>
    <property type="match status" value="1"/>
</dbReference>
<dbReference type="PROSITE" id="PS00086">
    <property type="entry name" value="CYTOCHROME_P450"/>
    <property type="match status" value="1"/>
</dbReference>
<organism>
    <name type="scientific">Mesocricetus auratus</name>
    <name type="common">Golden hamster</name>
    <dbReference type="NCBI Taxonomy" id="10036"/>
    <lineage>
        <taxon>Eukaryota</taxon>
        <taxon>Metazoa</taxon>
        <taxon>Chordata</taxon>
        <taxon>Craniata</taxon>
        <taxon>Vertebrata</taxon>
        <taxon>Euteleostomi</taxon>
        <taxon>Mammalia</taxon>
        <taxon>Eutheria</taxon>
        <taxon>Euarchontoglires</taxon>
        <taxon>Glires</taxon>
        <taxon>Rodentia</taxon>
        <taxon>Myomorpha</taxon>
        <taxon>Muroidea</taxon>
        <taxon>Cricetidae</taxon>
        <taxon>Cricetinae</taxon>
        <taxon>Mesocricetus</taxon>
    </lineage>
</organism>
<gene>
    <name type="primary">CYP2A8</name>
</gene>
<name>CP2A8_MESAU</name>
<sequence length="494" mass="57387">MLVSGMLLVVVLTCLSVMIIMSVWRQRRLLRKMPPGPTPLPFIGNFLELDTEKFYDCLSKMRERYGPVFTIHLGPRPAVMLWGYDAVKEALIDQAEELSDRGEQAFFDWFFKGYGVVFSSGERAKQLRRFSIATLRDFGFGKRGIEERTIEETSFLIQALRDTNGATIDPTFYMSRTVSNVISSIVFGNRFEYDDKEFLSLLGMIMRSFQFMSTSTGQLFEMFYSVMKHLPGCQHQAYKEMQGLEDFIARKVEENQRTLDPNSPRDFIDSFLIRMQEEKKNPRTQFHMRNLLMTTLNLFFAGTETVSTTTRYGFLLLMKYPHIAAKMHEEIDQVIGRNRQPKYEDHLKMPYTEAVIYEIQRFVDVVPLGLPRSTTKDIKFRDFLIPKGTDVFPVLSSVLKDPKFFSNPNDFNPQHFSDDKGQFKKSNAFMPFSVGKRYCFGESLAKMELFIFFTTIMQNFCFKSPQAPQDIDVTPQYFSFAAIPPKFTMSFLPR</sequence>
<evidence type="ECO:0000250" key="1"/>
<evidence type="ECO:0000305" key="2"/>
<keyword id="KW-0903">Direct protein sequencing</keyword>
<keyword id="KW-0256">Endoplasmic reticulum</keyword>
<keyword id="KW-0349">Heme</keyword>
<keyword id="KW-0408">Iron</keyword>
<keyword id="KW-0472">Membrane</keyword>
<keyword id="KW-0479">Metal-binding</keyword>
<keyword id="KW-0492">Microsome</keyword>
<keyword id="KW-0503">Monooxygenase</keyword>
<keyword id="KW-0560">Oxidoreductase</keyword>
<keyword id="KW-1185">Reference proteome</keyword>
<protein>
    <recommendedName>
        <fullName>Cytochrome P450 2A8</fullName>
        <ecNumber>1.14.14.1</ecNumber>
    </recommendedName>
    <alternativeName>
        <fullName>CYPIIA8</fullName>
    </alternativeName>
    <alternativeName>
        <fullName>Cytochrome P450-AFB</fullName>
    </alternativeName>
    <alternativeName>
        <fullName>Cytochrome P450-MC1</fullName>
    </alternativeName>
</protein>
<comment type="function">
    <text>Highly active in 7-ethoxycoumarin O-deethylation, and benzphetamine N-demethylation; moderately active in testosterone 7-alpha-hydroxylation, ethylmorphine N-demethylation, p-nitroanisole O-demethylation; and only slightly active in benzopyrene 3-hydroxylation, 7-ethoxyresorufin O-deethylation, testosterone 2-alpha-hydroxylation and testosterone 17-oxidation. Competent in the metabolic activation of aflatoxin B1.</text>
</comment>
<comment type="catalytic activity">
    <reaction>
        <text>an organic molecule + reduced [NADPH--hemoprotein reductase] + O2 = an alcohol + oxidized [NADPH--hemoprotein reductase] + H2O + H(+)</text>
        <dbReference type="Rhea" id="RHEA:17149"/>
        <dbReference type="Rhea" id="RHEA-COMP:11964"/>
        <dbReference type="Rhea" id="RHEA-COMP:11965"/>
        <dbReference type="ChEBI" id="CHEBI:15377"/>
        <dbReference type="ChEBI" id="CHEBI:15378"/>
        <dbReference type="ChEBI" id="CHEBI:15379"/>
        <dbReference type="ChEBI" id="CHEBI:30879"/>
        <dbReference type="ChEBI" id="CHEBI:57618"/>
        <dbReference type="ChEBI" id="CHEBI:58210"/>
        <dbReference type="ChEBI" id="CHEBI:142491"/>
        <dbReference type="EC" id="1.14.14.1"/>
    </reaction>
</comment>
<comment type="cofactor">
    <cofactor evidence="1">
        <name>heme</name>
        <dbReference type="ChEBI" id="CHEBI:30413"/>
    </cofactor>
</comment>
<comment type="subcellular location">
    <subcellularLocation>
        <location>Endoplasmic reticulum membrane</location>
        <topology>Peripheral membrane protein</topology>
    </subcellularLocation>
    <subcellularLocation>
        <location>Microsome membrane</location>
        <topology>Peripheral membrane protein</topology>
    </subcellularLocation>
</comment>
<comment type="tissue specificity">
    <text>Liver.</text>
</comment>
<comment type="induction">
    <text>By 3-methylcholanthrene (3MC).</text>
</comment>
<comment type="similarity">
    <text evidence="2">Belongs to the cytochrome P450 family.</text>
</comment>
<reference key="1">
    <citation type="journal article" date="1990" name="Arch. Biochem. Biophys.">
        <title>Cloning and characterization of two major 3-methylcholanthrene inducible hamster liver cytochrome P450s.</title>
        <authorList>
            <person name="Lai T.S."/>
            <person name="Chiang J.Y.L."/>
        </authorList>
    </citation>
    <scope>NUCLEOTIDE SEQUENCE [MRNA]</scope>
    <source>
        <tissue>Liver</tissue>
    </source>
</reference>
<reference key="2">
    <citation type="journal article" date="1989" name="Biochem. Biophys. Res. Commun.">
        <title>Complete cDNA sequence of a major 3-methylcholanthrene-inducible cytochrome P-450 isozyme (P-450AFB) of Syrian hamsters with high activity toward aflatoxin B1.</title>
        <authorList>
            <person name="Fukuhara M."/>
            <person name="Nagata K."/>
            <person name="Mizokami K."/>
            <person name="Yamazoe Y."/>
            <person name="Takanaka A."/>
            <person name="Kato R."/>
        </authorList>
    </citation>
    <scope>NUCLEOTIDE SEQUENCE [MRNA]</scope>
    <source>
        <tissue>Liver</tissue>
    </source>
</reference>
<reference key="3">
    <citation type="journal article" date="1990" name="J. Biochem.">
        <title>Purification and characterization of two forms of 2,3,4,7,8-pentachlorodibenzofuran-inducible cytochrome P-450 in hamster liver.</title>
        <authorList>
            <person name="Koga N."/>
            <person name="Ariyoshi N."/>
            <person name="Nakashima H."/>
            <person name="Yoshimura H."/>
        </authorList>
    </citation>
    <scope>PROTEIN SEQUENCE OF 1-15</scope>
    <source>
        <tissue>Liver</tissue>
    </source>
</reference>
<feature type="chain" id="PRO_0000051671" description="Cytochrome P450 2A8">
    <location>
        <begin position="1"/>
        <end position="494"/>
    </location>
</feature>
<feature type="binding site" description="axial binding residue" evidence="1">
    <location>
        <position position="439"/>
    </location>
    <ligand>
        <name>heme</name>
        <dbReference type="ChEBI" id="CHEBI:30413"/>
    </ligand>
    <ligandPart>
        <name>Fe</name>
        <dbReference type="ChEBI" id="CHEBI:18248"/>
    </ligandPart>
</feature>
<feature type="sequence conflict" description="In Ref. 2; AAA37084." evidence="2" ref="2">
    <original>S</original>
    <variation>L</variation>
    <location>
        <position position="417"/>
    </location>
</feature>
<accession>P24454</accession>